<sequence>MNIADGRQAFPAPAKLNLDLRITGRREDGYHNIESIFCLIDLQDTVYLKPRDDGKIILHNPVGGIPQEADLSYRAASLLQKYARNPAGVEIWLDKKIPTGAGLGGGSSDAATVLLVLNRWWQCSRTTQQLIDLGATLGADVPFFIFGKNAFASGIGEKLIGMDIPKQWYVIVKPPVHVSTAKIFTHEGLTRNSASSIMPTFQNLQPFRNDMQAVVFKEYPEVWKAYSELSRYGFALMTGSGACVFTACQDRDSAYNIYRQVSGLYEAYLAEGLSKHPLLSV</sequence>
<accession>A9M421</accession>
<dbReference type="EC" id="2.7.1.148" evidence="1"/>
<dbReference type="EMBL" id="CP000381">
    <property type="protein sequence ID" value="ABX73021.1"/>
    <property type="molecule type" value="Genomic_DNA"/>
</dbReference>
<dbReference type="RefSeq" id="WP_002229314.1">
    <property type="nucleotide sequence ID" value="NC_010120.1"/>
</dbReference>
<dbReference type="SMR" id="A9M421"/>
<dbReference type="KEGG" id="nmn:NMCC_0833"/>
<dbReference type="HOGENOM" id="CLU_053057_3_0_4"/>
<dbReference type="UniPathway" id="UPA00056">
    <property type="reaction ID" value="UER00094"/>
</dbReference>
<dbReference type="Proteomes" id="UP000001177">
    <property type="component" value="Chromosome"/>
</dbReference>
<dbReference type="GO" id="GO:0050515">
    <property type="term" value="F:4-(cytidine 5'-diphospho)-2-C-methyl-D-erythritol kinase activity"/>
    <property type="evidence" value="ECO:0007669"/>
    <property type="project" value="UniProtKB-UniRule"/>
</dbReference>
<dbReference type="GO" id="GO:0005524">
    <property type="term" value="F:ATP binding"/>
    <property type="evidence" value="ECO:0007669"/>
    <property type="project" value="UniProtKB-UniRule"/>
</dbReference>
<dbReference type="GO" id="GO:0019288">
    <property type="term" value="P:isopentenyl diphosphate biosynthetic process, methylerythritol 4-phosphate pathway"/>
    <property type="evidence" value="ECO:0007669"/>
    <property type="project" value="UniProtKB-UniRule"/>
</dbReference>
<dbReference type="GO" id="GO:0016114">
    <property type="term" value="P:terpenoid biosynthetic process"/>
    <property type="evidence" value="ECO:0007669"/>
    <property type="project" value="InterPro"/>
</dbReference>
<dbReference type="FunFam" id="3.30.70.890:FF:000021">
    <property type="entry name" value="4-diphosphocytidyl-2-C-methyl-D-erythritol kinase"/>
    <property type="match status" value="1"/>
</dbReference>
<dbReference type="Gene3D" id="3.30.230.10">
    <property type="match status" value="1"/>
</dbReference>
<dbReference type="Gene3D" id="3.30.70.890">
    <property type="entry name" value="GHMP kinase, C-terminal domain"/>
    <property type="match status" value="1"/>
</dbReference>
<dbReference type="HAMAP" id="MF_00061">
    <property type="entry name" value="IspE"/>
    <property type="match status" value="1"/>
</dbReference>
<dbReference type="InterPro" id="IPR013750">
    <property type="entry name" value="GHMP_kinase_C_dom"/>
</dbReference>
<dbReference type="InterPro" id="IPR036554">
    <property type="entry name" value="GHMP_kinase_C_sf"/>
</dbReference>
<dbReference type="InterPro" id="IPR006204">
    <property type="entry name" value="GHMP_kinase_N_dom"/>
</dbReference>
<dbReference type="InterPro" id="IPR004424">
    <property type="entry name" value="IspE"/>
</dbReference>
<dbReference type="InterPro" id="IPR020568">
    <property type="entry name" value="Ribosomal_Su5_D2-typ_SF"/>
</dbReference>
<dbReference type="InterPro" id="IPR014721">
    <property type="entry name" value="Ribsml_uS5_D2-typ_fold_subgr"/>
</dbReference>
<dbReference type="NCBIfam" id="TIGR00154">
    <property type="entry name" value="ispE"/>
    <property type="match status" value="1"/>
</dbReference>
<dbReference type="PANTHER" id="PTHR43527">
    <property type="entry name" value="4-DIPHOSPHOCYTIDYL-2-C-METHYL-D-ERYTHRITOL KINASE, CHLOROPLASTIC"/>
    <property type="match status" value="1"/>
</dbReference>
<dbReference type="PANTHER" id="PTHR43527:SF2">
    <property type="entry name" value="4-DIPHOSPHOCYTIDYL-2-C-METHYL-D-ERYTHRITOL KINASE, CHLOROPLASTIC"/>
    <property type="match status" value="1"/>
</dbReference>
<dbReference type="Pfam" id="PF08544">
    <property type="entry name" value="GHMP_kinases_C"/>
    <property type="match status" value="1"/>
</dbReference>
<dbReference type="Pfam" id="PF00288">
    <property type="entry name" value="GHMP_kinases_N"/>
    <property type="match status" value="1"/>
</dbReference>
<dbReference type="PIRSF" id="PIRSF010376">
    <property type="entry name" value="IspE"/>
    <property type="match status" value="1"/>
</dbReference>
<dbReference type="SUPFAM" id="SSF55060">
    <property type="entry name" value="GHMP Kinase, C-terminal domain"/>
    <property type="match status" value="1"/>
</dbReference>
<dbReference type="SUPFAM" id="SSF54211">
    <property type="entry name" value="Ribosomal protein S5 domain 2-like"/>
    <property type="match status" value="1"/>
</dbReference>
<comment type="function">
    <text evidence="1">Catalyzes the phosphorylation of the position 2 hydroxy group of 4-diphosphocytidyl-2C-methyl-D-erythritol.</text>
</comment>
<comment type="catalytic activity">
    <reaction evidence="1">
        <text>4-CDP-2-C-methyl-D-erythritol + ATP = 4-CDP-2-C-methyl-D-erythritol 2-phosphate + ADP + H(+)</text>
        <dbReference type="Rhea" id="RHEA:18437"/>
        <dbReference type="ChEBI" id="CHEBI:15378"/>
        <dbReference type="ChEBI" id="CHEBI:30616"/>
        <dbReference type="ChEBI" id="CHEBI:57823"/>
        <dbReference type="ChEBI" id="CHEBI:57919"/>
        <dbReference type="ChEBI" id="CHEBI:456216"/>
        <dbReference type="EC" id="2.7.1.148"/>
    </reaction>
</comment>
<comment type="pathway">
    <text evidence="1">Isoprenoid biosynthesis; isopentenyl diphosphate biosynthesis via DXP pathway; isopentenyl diphosphate from 1-deoxy-D-xylulose 5-phosphate: step 3/6.</text>
</comment>
<comment type="similarity">
    <text evidence="1">Belongs to the GHMP kinase family. IspE subfamily.</text>
</comment>
<protein>
    <recommendedName>
        <fullName evidence="1">4-diphosphocytidyl-2-C-methyl-D-erythritol kinase</fullName>
        <shortName evidence="1">CMK</shortName>
        <ecNumber evidence="1">2.7.1.148</ecNumber>
    </recommendedName>
    <alternativeName>
        <fullName evidence="1">4-(cytidine-5'-diphospho)-2-C-methyl-D-erythritol kinase</fullName>
    </alternativeName>
</protein>
<evidence type="ECO:0000255" key="1">
    <source>
        <dbReference type="HAMAP-Rule" id="MF_00061"/>
    </source>
</evidence>
<organism>
    <name type="scientific">Neisseria meningitidis serogroup C (strain 053442)</name>
    <dbReference type="NCBI Taxonomy" id="374833"/>
    <lineage>
        <taxon>Bacteria</taxon>
        <taxon>Pseudomonadati</taxon>
        <taxon>Pseudomonadota</taxon>
        <taxon>Betaproteobacteria</taxon>
        <taxon>Neisseriales</taxon>
        <taxon>Neisseriaceae</taxon>
        <taxon>Neisseria</taxon>
    </lineage>
</organism>
<name>ISPE_NEIM0</name>
<feature type="chain" id="PRO_1000075052" description="4-diphosphocytidyl-2-C-methyl-D-erythritol kinase">
    <location>
        <begin position="1"/>
        <end position="281"/>
    </location>
</feature>
<feature type="active site" evidence="1">
    <location>
        <position position="15"/>
    </location>
</feature>
<feature type="active site" evidence="1">
    <location>
        <position position="140"/>
    </location>
</feature>
<feature type="binding site" evidence="1">
    <location>
        <begin position="98"/>
        <end position="108"/>
    </location>
    <ligand>
        <name>ATP</name>
        <dbReference type="ChEBI" id="CHEBI:30616"/>
    </ligand>
</feature>
<gene>
    <name evidence="1" type="primary">ispE</name>
    <name type="ordered locus">NMCC_0833</name>
</gene>
<reference key="1">
    <citation type="journal article" date="2008" name="Genomics">
        <title>Characterization of ST-4821 complex, a unique Neisseria meningitidis clone.</title>
        <authorList>
            <person name="Peng J."/>
            <person name="Yang L."/>
            <person name="Yang F."/>
            <person name="Yang J."/>
            <person name="Yan Y."/>
            <person name="Nie H."/>
            <person name="Zhang X."/>
            <person name="Xiong Z."/>
            <person name="Jiang Y."/>
            <person name="Cheng F."/>
            <person name="Xu X."/>
            <person name="Chen S."/>
            <person name="Sun L."/>
            <person name="Li W."/>
            <person name="Shen Y."/>
            <person name="Shao Z."/>
            <person name="Liang X."/>
            <person name="Xu J."/>
            <person name="Jin Q."/>
        </authorList>
    </citation>
    <scope>NUCLEOTIDE SEQUENCE [LARGE SCALE GENOMIC DNA]</scope>
    <source>
        <strain>053442</strain>
    </source>
</reference>
<proteinExistence type="inferred from homology"/>
<keyword id="KW-0067">ATP-binding</keyword>
<keyword id="KW-0414">Isoprene biosynthesis</keyword>
<keyword id="KW-0418">Kinase</keyword>
<keyword id="KW-0547">Nucleotide-binding</keyword>
<keyword id="KW-0808">Transferase</keyword>